<keyword id="KW-1003">Cell membrane</keyword>
<keyword id="KW-0407">Ion channel</keyword>
<keyword id="KW-0406">Ion transport</keyword>
<keyword id="KW-0472">Membrane</keyword>
<keyword id="KW-0630">Potassium</keyword>
<keyword id="KW-0631">Potassium channel</keyword>
<keyword id="KW-0633">Potassium transport</keyword>
<keyword id="KW-1185">Reference proteome</keyword>
<keyword id="KW-0812">Transmembrane</keyword>
<keyword id="KW-1133">Transmembrane helix</keyword>
<keyword id="KW-0813">Transport</keyword>
<keyword id="KW-0851">Voltage-gated channel</keyword>
<sequence length="503" mass="56725">MELLPPRGRAPPDSSLDSASLTSLDSSVFCSEGEGEPLALGDSFTVNVGGSRFVLSQQALSCFPHTRLGKLAVVVASCRRRGALAAVPSPLELCDDANPVDNEYFFDRSSQAFRYVLHYYRTGRLHVMEQLCALSFLQEIQYWGIDELSIDSCCRDRYFRRKELSETLDFKKDTEDQESQHESEQDFSQGRCPTIRQKLWNILEKPGSCTAARIFGVISIIFVAVSIVNMALMSAELSWLDPQLLEILEYVCISWFTGEFVLRFLCVRDRCRFLRKVPNIIDLLAILPFYITLLVESLSGSQTTQELENVGRIVQVLRLLRALRMLKLGRHSTGLRSLGMTITQCYEEVGLLLLFLSVGISIFSTVEYFAEQSIPDTTFTSVPCAWWWATTSMTTVGYGDIRPDTTTGKIVAFMCILSGILVLALPIAIINDRFSACYFTLKLKEAAVRQREALKKLTKNIATDSYISVNLRDVYARSIMEMLRLKGRERASTRSSGGDDFWF</sequence>
<evidence type="ECO:0000250" key="1"/>
<evidence type="ECO:0000255" key="2"/>
<evidence type="ECO:0000305" key="3"/>
<protein>
    <recommendedName>
        <fullName>Potassium voltage-gated channel subfamily V member 1</fullName>
    </recommendedName>
    <alternativeName>
        <fullName>Voltage-gated potassium channel subunit Kv8.1</fullName>
    </alternativeName>
</protein>
<accession>Q0P583</accession>
<organism>
    <name type="scientific">Bos taurus</name>
    <name type="common">Bovine</name>
    <dbReference type="NCBI Taxonomy" id="9913"/>
    <lineage>
        <taxon>Eukaryota</taxon>
        <taxon>Metazoa</taxon>
        <taxon>Chordata</taxon>
        <taxon>Craniata</taxon>
        <taxon>Vertebrata</taxon>
        <taxon>Euteleostomi</taxon>
        <taxon>Mammalia</taxon>
        <taxon>Eutheria</taxon>
        <taxon>Laurasiatheria</taxon>
        <taxon>Artiodactyla</taxon>
        <taxon>Ruminantia</taxon>
        <taxon>Pecora</taxon>
        <taxon>Bovidae</taxon>
        <taxon>Bovinae</taxon>
        <taxon>Bos</taxon>
    </lineage>
</organism>
<feature type="chain" id="PRO_0000308349" description="Potassium voltage-gated channel subfamily V member 1">
    <location>
        <begin position="1"/>
        <end position="503"/>
    </location>
</feature>
<feature type="topological domain" description="Cytoplasmic" evidence="2">
    <location>
        <begin position="1"/>
        <end position="213"/>
    </location>
</feature>
<feature type="transmembrane region" description="Helical; Name=Segment S1" evidence="2">
    <location>
        <begin position="214"/>
        <end position="234"/>
    </location>
</feature>
<feature type="topological domain" description="Extracellular" evidence="2">
    <location>
        <begin position="235"/>
        <end position="246"/>
    </location>
</feature>
<feature type="transmembrane region" description="Helical; Name=Segment S2" evidence="2">
    <location>
        <begin position="247"/>
        <end position="267"/>
    </location>
</feature>
<feature type="topological domain" description="Cytoplasmic" evidence="2">
    <location>
        <begin position="268"/>
        <end position="279"/>
    </location>
</feature>
<feature type="transmembrane region" description="Helical; Name=Segment S3" evidence="2">
    <location>
        <begin position="280"/>
        <end position="300"/>
    </location>
</feature>
<feature type="topological domain" description="Extracellular" evidence="2">
    <location>
        <begin position="301"/>
        <end position="312"/>
    </location>
</feature>
<feature type="transmembrane region" description="Helical; Voltage-sensor; Name=Segment S4" evidence="2">
    <location>
        <begin position="313"/>
        <end position="334"/>
    </location>
</feature>
<feature type="topological domain" description="Cytoplasmic" evidence="2">
    <location>
        <begin position="335"/>
        <end position="348"/>
    </location>
</feature>
<feature type="transmembrane region" description="Helical; Name=Segment S5" evidence="2">
    <location>
        <begin position="349"/>
        <end position="369"/>
    </location>
</feature>
<feature type="transmembrane region" description="Helical; Name=Segment S6" evidence="2">
    <location>
        <begin position="410"/>
        <end position="430"/>
    </location>
</feature>
<feature type="topological domain" description="Cytoplasmic" evidence="2">
    <location>
        <begin position="431"/>
        <end position="503"/>
    </location>
</feature>
<feature type="short sequence motif" description="Selectivity filter" evidence="1">
    <location>
        <begin position="395"/>
        <end position="400"/>
    </location>
</feature>
<proteinExistence type="evidence at transcript level"/>
<comment type="function">
    <text evidence="1">Potassium channel subunit that does not form functional channels by itself. Modulates KCNB1 and KCNB2 channel activity by shifting the threshold for inactivation to more negative values and by slowing the rate of inactivation. Can down-regulate the channel activity of KCNB1, KCNB2, KCNC4 and KCND1, possibly by trapping them in intracellular membranes (By similarity).</text>
</comment>
<comment type="subunit">
    <text evidence="1">Heteromultimer with KCNB1 and KCNB2. Interacts with KCNC4 and KCND1 (By similarity).</text>
</comment>
<comment type="subcellular location">
    <subcellularLocation>
        <location evidence="1">Cell membrane</location>
        <topology evidence="1">Multi-pass membrane protein</topology>
    </subcellularLocation>
    <text evidence="1">Has to be associated with another potassium channel subunit to get inserted in the plasma membrane. Remains intracellular in the absence of KCNB2 (By similarity).</text>
</comment>
<comment type="domain">
    <text evidence="1">The segment S4 is probably the voltage-sensor and is characterized by a series of positively charged amino acids at every third position.</text>
</comment>
<comment type="similarity">
    <text evidence="3">Belongs to the potassium channel family. V (TC 1.A.1.2) subfamily. Kv8.1/KCNV1 sub-subfamily.</text>
</comment>
<reference key="1">
    <citation type="submission" date="2006-08" db="EMBL/GenBank/DDBJ databases">
        <authorList>
            <consortium name="NIH - Mammalian Gene Collection (MGC) project"/>
        </authorList>
    </citation>
    <scope>NUCLEOTIDE SEQUENCE [LARGE SCALE MRNA]</scope>
    <source>
        <strain>Hereford</strain>
        <tissue>Brain cortex</tissue>
    </source>
</reference>
<dbReference type="EMBL" id="EE347275">
    <property type="status" value="NOT_ANNOTATED_CDS"/>
    <property type="molecule type" value="mRNA"/>
</dbReference>
<dbReference type="EMBL" id="BC120369">
    <property type="protein sequence ID" value="AAI20370.1"/>
    <property type="molecule type" value="mRNA"/>
</dbReference>
<dbReference type="RefSeq" id="NP_001160032.1">
    <property type="nucleotide sequence ID" value="NM_001166560.1"/>
</dbReference>
<dbReference type="SMR" id="Q0P583"/>
<dbReference type="FunCoup" id="Q0P583">
    <property type="interactions" value="4"/>
</dbReference>
<dbReference type="STRING" id="9913.ENSBTAP00000011219"/>
<dbReference type="PaxDb" id="9913-ENSBTAP00000011219"/>
<dbReference type="GeneID" id="505732"/>
<dbReference type="KEGG" id="bta:505732"/>
<dbReference type="CTD" id="27012"/>
<dbReference type="eggNOG" id="KOG3713">
    <property type="taxonomic scope" value="Eukaryota"/>
</dbReference>
<dbReference type="InParanoid" id="Q0P583"/>
<dbReference type="OrthoDB" id="296522at2759"/>
<dbReference type="Proteomes" id="UP000009136">
    <property type="component" value="Unplaced"/>
</dbReference>
<dbReference type="GO" id="GO:0016020">
    <property type="term" value="C:membrane"/>
    <property type="evidence" value="ECO:0000318"/>
    <property type="project" value="GO_Central"/>
</dbReference>
<dbReference type="GO" id="GO:0008076">
    <property type="term" value="C:voltage-gated potassium channel complex"/>
    <property type="evidence" value="ECO:0000318"/>
    <property type="project" value="GO_Central"/>
</dbReference>
<dbReference type="GO" id="GO:0015459">
    <property type="term" value="F:potassium channel regulator activity"/>
    <property type="evidence" value="ECO:0000318"/>
    <property type="project" value="GO_Central"/>
</dbReference>
<dbReference type="GO" id="GO:0005249">
    <property type="term" value="F:voltage-gated potassium channel activity"/>
    <property type="evidence" value="ECO:0007669"/>
    <property type="project" value="InterPro"/>
</dbReference>
<dbReference type="GO" id="GO:0001508">
    <property type="term" value="P:action potential"/>
    <property type="evidence" value="ECO:0000318"/>
    <property type="project" value="GO_Central"/>
</dbReference>
<dbReference type="GO" id="GO:0071805">
    <property type="term" value="P:potassium ion transmembrane transport"/>
    <property type="evidence" value="ECO:0000318"/>
    <property type="project" value="GO_Central"/>
</dbReference>
<dbReference type="GO" id="GO:0051260">
    <property type="term" value="P:protein homooligomerization"/>
    <property type="evidence" value="ECO:0007669"/>
    <property type="project" value="InterPro"/>
</dbReference>
<dbReference type="FunFam" id="1.10.287.70:FF:000005">
    <property type="entry name" value="potassium voltage-gated channel subfamily G member 1"/>
    <property type="match status" value="1"/>
</dbReference>
<dbReference type="FunFam" id="1.20.120.350:FF:000044">
    <property type="entry name" value="Potassium voltage-gated channel subfamily V member 1"/>
    <property type="match status" value="1"/>
</dbReference>
<dbReference type="FunFam" id="3.30.710.10:FF:000067">
    <property type="entry name" value="Potassium voltage-gated channel subfamily V member 1"/>
    <property type="match status" value="1"/>
</dbReference>
<dbReference type="Gene3D" id="1.10.287.70">
    <property type="match status" value="1"/>
</dbReference>
<dbReference type="Gene3D" id="3.30.710.10">
    <property type="entry name" value="Potassium Channel Kv1.1, Chain A"/>
    <property type="match status" value="1"/>
</dbReference>
<dbReference type="Gene3D" id="1.20.120.350">
    <property type="entry name" value="Voltage-gated potassium channels. Chain C"/>
    <property type="match status" value="1"/>
</dbReference>
<dbReference type="InterPro" id="IPR000210">
    <property type="entry name" value="BTB/POZ_dom"/>
</dbReference>
<dbReference type="InterPro" id="IPR005821">
    <property type="entry name" value="Ion_trans_dom"/>
</dbReference>
<dbReference type="InterPro" id="IPR003968">
    <property type="entry name" value="K_chnl_volt-dep_Kv"/>
</dbReference>
<dbReference type="InterPro" id="IPR003970">
    <property type="entry name" value="K_chnl_volt-dep_Kv8.1"/>
</dbReference>
<dbReference type="InterPro" id="IPR011333">
    <property type="entry name" value="SKP1/BTB/POZ_sf"/>
</dbReference>
<dbReference type="InterPro" id="IPR003131">
    <property type="entry name" value="T1-type_BTB"/>
</dbReference>
<dbReference type="InterPro" id="IPR028325">
    <property type="entry name" value="VG_K_chnl"/>
</dbReference>
<dbReference type="InterPro" id="IPR027359">
    <property type="entry name" value="Volt_channel_dom_sf"/>
</dbReference>
<dbReference type="PANTHER" id="PTHR11537:SF38">
    <property type="entry name" value="POTASSIUM VOLTAGE-GATED CHANNEL SUBFAMILY V MEMBER 1"/>
    <property type="match status" value="1"/>
</dbReference>
<dbReference type="PANTHER" id="PTHR11537">
    <property type="entry name" value="VOLTAGE-GATED POTASSIUM CHANNEL"/>
    <property type="match status" value="1"/>
</dbReference>
<dbReference type="Pfam" id="PF02214">
    <property type="entry name" value="BTB_2"/>
    <property type="match status" value="1"/>
</dbReference>
<dbReference type="Pfam" id="PF00520">
    <property type="entry name" value="Ion_trans"/>
    <property type="match status" value="1"/>
</dbReference>
<dbReference type="PRINTS" id="PR00169">
    <property type="entry name" value="KCHANNEL"/>
</dbReference>
<dbReference type="PRINTS" id="PR01493">
    <property type="entry name" value="KV8CHANNEL"/>
</dbReference>
<dbReference type="PRINTS" id="PR01491">
    <property type="entry name" value="KVCHANNEL"/>
</dbReference>
<dbReference type="SMART" id="SM00225">
    <property type="entry name" value="BTB"/>
    <property type="match status" value="1"/>
</dbReference>
<dbReference type="SUPFAM" id="SSF54695">
    <property type="entry name" value="POZ domain"/>
    <property type="match status" value="1"/>
</dbReference>
<dbReference type="SUPFAM" id="SSF81324">
    <property type="entry name" value="Voltage-gated potassium channels"/>
    <property type="match status" value="1"/>
</dbReference>
<name>KCNV1_BOVIN</name>
<gene>
    <name type="primary">KCNV1</name>
</gene>